<accession>Q82683</accession>
<protein>
    <recommendedName>
        <fullName>Glycoprotein</fullName>
    </recommendedName>
    <alternativeName>
        <fullName>Spike glycoprotein</fullName>
    </alternativeName>
</protein>
<reference key="1">
    <citation type="journal article" date="1995" name="Virus Res.">
        <title>The complete genome structure and phylogenetic relationship of infectious hematopoietic necrosis virus.</title>
        <authorList>
            <person name="Morzunov S.P."/>
            <person name="Winton J.R."/>
            <person name="Nichol S.T."/>
        </authorList>
    </citation>
    <scope>NUCLEOTIDE SEQUENCE [GENOMIC RNA]</scope>
</reference>
<keyword id="KW-0325">Glycoprotein</keyword>
<keyword id="KW-0945">Host-virus interaction</keyword>
<keyword id="KW-0472">Membrane</keyword>
<keyword id="KW-1185">Reference proteome</keyword>
<keyword id="KW-0732">Signal</keyword>
<keyword id="KW-0812">Transmembrane</keyword>
<keyword id="KW-1133">Transmembrane helix</keyword>
<keyword id="KW-1161">Viral attachment to host cell</keyword>
<keyword id="KW-0261">Viral envelope protein</keyword>
<keyword id="KW-0946">Virion</keyword>
<keyword id="KW-1160">Virus entry into host cell</keyword>
<sequence length="508" mass="56755">MDTMITTPLILILITCGANSQTVKPDTASESDQPTWSNPLFTYPEGCTLDKLSKVNASQLRCPRIFDDENRGLIAYPTSIRSLSVGNDLGDIHTQGNHIHKVLYRTICSTGFFGGQTIEKALVKMKLSTKEAGAYDTTTAAALYFPAPRCQWYTDNVQNDLIFYYTTQKSVLRDPYTRDFLDSDFIGGKCTKSPCQTHWSNVVWMGDAGIPACDSSQEIKAHLFVDKISNRVVKATSYGHHPWGLHQACMIEFCGQQWIRTDLGDLISVVYNSGSEILSFPKCEDKTVGMRGNLDDFAYLDDLVKASESREECLEAHAEIISTNSVTPYLLSKFRSPHPGINDVYAMHKGSIYHGMCMTVAVDEVSKDRTTYRAHRATSFTKWERPFGDEWEGFHGLHGNNTTIIPDLEKYVAQYKMSMMEPMSIKSVPHPSILALYNETDVSGISIRKLDSFDLQSLHWSFWPTISALGGIPFVLLLAVAACCCWSGRPPTPSVPQSIPMYHLANRS</sequence>
<organismHost>
    <name type="scientific">Salmo</name>
    <dbReference type="NCBI Taxonomy" id="8028"/>
</organismHost>
<organism>
    <name type="scientific">Infectious hematopoietic necrosis virus (strain WRAC)</name>
    <name type="common">IHNV</name>
    <dbReference type="NCBI Taxonomy" id="429314"/>
    <lineage>
        <taxon>Viruses</taxon>
        <taxon>Riboviria</taxon>
        <taxon>Orthornavirae</taxon>
        <taxon>Negarnaviricota</taxon>
        <taxon>Haploviricotina</taxon>
        <taxon>Monjiviricetes</taxon>
        <taxon>Mononegavirales</taxon>
        <taxon>Rhabdoviridae</taxon>
        <taxon>Gammarhabdovirinae</taxon>
        <taxon>Novirhabdovirus</taxon>
        <taxon>Novirhabdovirus salmonid</taxon>
    </lineage>
</organism>
<gene>
    <name type="primary">G</name>
</gene>
<dbReference type="EMBL" id="L40883">
    <property type="protein sequence ID" value="AAC42153.1"/>
    <property type="molecule type" value="Genomic_RNA"/>
</dbReference>
<dbReference type="RefSeq" id="NP_042679.1">
    <property type="nucleotide sequence ID" value="NC_001652.1"/>
</dbReference>
<dbReference type="SMR" id="Q82683"/>
<dbReference type="GlyCosmos" id="Q82683">
    <property type="glycosylation" value="4 sites, No reported glycans"/>
</dbReference>
<dbReference type="GeneID" id="1489848"/>
<dbReference type="KEGG" id="vg:1489848"/>
<dbReference type="Proteomes" id="UP000007212">
    <property type="component" value="Segment"/>
</dbReference>
<dbReference type="GO" id="GO:0016020">
    <property type="term" value="C:membrane"/>
    <property type="evidence" value="ECO:0007669"/>
    <property type="project" value="UniProtKB-KW"/>
</dbReference>
<dbReference type="GO" id="GO:0019031">
    <property type="term" value="C:viral envelope"/>
    <property type="evidence" value="ECO:0007669"/>
    <property type="project" value="UniProtKB-KW"/>
</dbReference>
<dbReference type="GO" id="GO:0055036">
    <property type="term" value="C:virion membrane"/>
    <property type="evidence" value="ECO:0007669"/>
    <property type="project" value="UniProtKB-SubCell"/>
</dbReference>
<dbReference type="GO" id="GO:0046718">
    <property type="term" value="P:symbiont entry into host cell"/>
    <property type="evidence" value="ECO:0007669"/>
    <property type="project" value="UniProtKB-KW"/>
</dbReference>
<dbReference type="GO" id="GO:0019062">
    <property type="term" value="P:virion attachment to host cell"/>
    <property type="evidence" value="ECO:0007669"/>
    <property type="project" value="UniProtKB-KW"/>
</dbReference>
<dbReference type="InterPro" id="IPR055447">
    <property type="entry name" value="Rhabdo_glycop_CD"/>
</dbReference>
<dbReference type="InterPro" id="IPR001903">
    <property type="entry name" value="Rhabdo_glycop_FD"/>
</dbReference>
<dbReference type="InterPro" id="IPR002417">
    <property type="entry name" value="Spike_prot"/>
</dbReference>
<dbReference type="Pfam" id="PF24833">
    <property type="entry name" value="Rhabdo_glycop_CD"/>
    <property type="match status" value="1"/>
</dbReference>
<dbReference type="Pfam" id="PF00974">
    <property type="entry name" value="Rhabdo_glycop_FD"/>
    <property type="match status" value="1"/>
</dbReference>
<dbReference type="PRINTS" id="PR00796">
    <property type="entry name" value="SPIKEPROTEIN"/>
</dbReference>
<dbReference type="SUPFAM" id="SSF161008">
    <property type="entry name" value="Viral glycoprotein ectodomain-like"/>
    <property type="match status" value="1"/>
</dbReference>
<name>GLYCO_IHNVW</name>
<proteinExistence type="inferred from homology"/>
<comment type="function">
    <text evidence="1">Binds to specific receptor at cellular surface, bringing about the attachment of the virus particle to the cell. Plays a major role in the determination of host range restriction and virulence. Class I viral fusion protein. Responsible for penetration of the viral nucleocapsid into the cell cytoplasm by mediating the fusion of the membrane of the endocytosed virus particle with the endosomal membrane. Low pH in endosomes induce an irreversible conformational change in G, releasing a fusion hydrophobic peptide (By similarity).</text>
</comment>
<comment type="subunit">
    <text evidence="1">Homotrimer.</text>
</comment>
<comment type="subcellular location">
    <subcellularLocation>
        <location evidence="1">Virion membrane</location>
        <topology evidence="1">Single-pass type I membrane protein</topology>
    </subcellularLocation>
</comment>
<comment type="similarity">
    <text evidence="3">Belongs to the novirhabdovirus glycoprotein family.</text>
</comment>
<evidence type="ECO:0000250" key="1"/>
<evidence type="ECO:0000255" key="2"/>
<evidence type="ECO:0000305" key="3"/>
<feature type="signal peptide" evidence="2">
    <location>
        <begin position="1"/>
        <end position="20"/>
    </location>
</feature>
<feature type="chain" id="PRO_0000282900" description="Glycoprotein">
    <location>
        <begin position="21"/>
        <end position="508"/>
    </location>
</feature>
<feature type="topological domain" description="Virion surface" evidence="2">
    <location>
        <begin position="21"/>
        <end position="461"/>
    </location>
</feature>
<feature type="transmembrane region" description="Helical" evidence="2">
    <location>
        <begin position="462"/>
        <end position="482"/>
    </location>
</feature>
<feature type="topological domain" description="Intravirion" evidence="2">
    <location>
        <begin position="483"/>
        <end position="508"/>
    </location>
</feature>
<feature type="glycosylation site" description="N-linked (GlcNAc...) asparagine; by host" evidence="2">
    <location>
        <position position="56"/>
    </location>
</feature>
<feature type="glycosylation site" description="N-linked (GlcNAc...) asparagine; by host" evidence="2">
    <location>
        <position position="400"/>
    </location>
</feature>
<feature type="glycosylation site" description="N-linked (GlcNAc...) asparagine; by host" evidence="2">
    <location>
        <position position="401"/>
    </location>
</feature>
<feature type="glycosylation site" description="N-linked (GlcNAc...) asparagine; by host" evidence="2">
    <location>
        <position position="438"/>
    </location>
</feature>